<gene>
    <name type="primary">SETD1A</name>
    <name evidence="26" type="synonym">KIAA0339</name>
    <name type="synonym">KMT2F</name>
    <name type="synonym">SET1</name>
    <name type="synonym">SET1A</name>
</gene>
<dbReference type="EC" id="2.1.1.364" evidence="17 18"/>
<dbReference type="EMBL" id="AB002337">
    <property type="protein sequence ID" value="BAA20797.2"/>
    <property type="status" value="ALT_INIT"/>
    <property type="molecule type" value="mRNA"/>
</dbReference>
<dbReference type="EMBL" id="AC135048">
    <property type="status" value="NOT_ANNOTATED_CDS"/>
    <property type="molecule type" value="Genomic_DNA"/>
</dbReference>
<dbReference type="EMBL" id="BC027450">
    <property type="protein sequence ID" value="AAH27450.1"/>
    <property type="molecule type" value="mRNA"/>
</dbReference>
<dbReference type="EMBL" id="BC035795">
    <property type="protein sequence ID" value="AAH35795.1"/>
    <property type="status" value="ALT_SEQ"/>
    <property type="molecule type" value="mRNA"/>
</dbReference>
<dbReference type="CCDS" id="CCDS32435.1"/>
<dbReference type="RefSeq" id="NP_055527.1">
    <property type="nucleotide sequence ID" value="NM_014712.3"/>
</dbReference>
<dbReference type="RefSeq" id="XP_005255780.1">
    <property type="nucleotide sequence ID" value="XM_005255723.1"/>
</dbReference>
<dbReference type="RefSeq" id="XP_006721169.1">
    <property type="nucleotide sequence ID" value="XM_006721106.4"/>
</dbReference>
<dbReference type="RefSeq" id="XP_016879398.1">
    <property type="nucleotide sequence ID" value="XM_017023909.2"/>
</dbReference>
<dbReference type="RefSeq" id="XP_024306267.1">
    <property type="nucleotide sequence ID" value="XM_024450499.2"/>
</dbReference>
<dbReference type="RefSeq" id="XP_047290918.1">
    <property type="nucleotide sequence ID" value="XM_047434962.1"/>
</dbReference>
<dbReference type="RefSeq" id="XP_047290919.1">
    <property type="nucleotide sequence ID" value="XM_047434963.1"/>
</dbReference>
<dbReference type="RefSeq" id="XP_054170479.1">
    <property type="nucleotide sequence ID" value="XM_054314504.1"/>
</dbReference>
<dbReference type="RefSeq" id="XP_054170480.1">
    <property type="nucleotide sequence ID" value="XM_054314505.1"/>
</dbReference>
<dbReference type="RefSeq" id="XP_054170481.1">
    <property type="nucleotide sequence ID" value="XM_054314506.1"/>
</dbReference>
<dbReference type="RefSeq" id="XP_054170482.1">
    <property type="nucleotide sequence ID" value="XM_054314507.1"/>
</dbReference>
<dbReference type="RefSeq" id="XP_054170483.1">
    <property type="nucleotide sequence ID" value="XM_054314508.1"/>
</dbReference>
<dbReference type="RefSeq" id="XP_054170484.1">
    <property type="nucleotide sequence ID" value="XM_054314509.1"/>
</dbReference>
<dbReference type="PDB" id="3S8S">
    <property type="method" value="X-ray"/>
    <property type="resolution" value="1.30 A"/>
    <property type="chains" value="A=89-197"/>
</dbReference>
<dbReference type="PDB" id="3UVN">
    <property type="method" value="X-ray"/>
    <property type="resolution" value="1.79 A"/>
    <property type="chains" value="B/D=1492-1502"/>
</dbReference>
<dbReference type="PDB" id="4EWR">
    <property type="method" value="X-ray"/>
    <property type="resolution" value="1.50 A"/>
    <property type="chains" value="C=1488-1501"/>
</dbReference>
<dbReference type="PDB" id="8ILY">
    <property type="method" value="X-ray"/>
    <property type="resolution" value="1.70 A"/>
    <property type="chains" value="A/B=89-195"/>
</dbReference>
<dbReference type="PDBsum" id="3S8S"/>
<dbReference type="PDBsum" id="3UVN"/>
<dbReference type="PDBsum" id="4EWR"/>
<dbReference type="PDBsum" id="8ILY"/>
<dbReference type="SMR" id="O15047"/>
<dbReference type="BioGRID" id="115088">
    <property type="interactions" value="181"/>
</dbReference>
<dbReference type="ComplexPortal" id="CPX-7110">
    <property type="entry name" value="Histone-lysine N-methyltransferase complex, SET1A variant"/>
</dbReference>
<dbReference type="CORUM" id="O15047"/>
<dbReference type="DIP" id="DIP-33494N"/>
<dbReference type="ELM" id="O15047"/>
<dbReference type="FunCoup" id="O15047">
    <property type="interactions" value="3280"/>
</dbReference>
<dbReference type="IntAct" id="O15047">
    <property type="interactions" value="83"/>
</dbReference>
<dbReference type="MINT" id="O15047"/>
<dbReference type="STRING" id="9606.ENSP00000262519"/>
<dbReference type="ChEMBL" id="CHEMBL4105954"/>
<dbReference type="GlyCosmos" id="O15047">
    <property type="glycosylation" value="6 sites, 1 glycan"/>
</dbReference>
<dbReference type="GlyGen" id="O15047">
    <property type="glycosylation" value="19 sites, 1 N-linked glycan (1 site), 1 O-linked glycan (12 sites)"/>
</dbReference>
<dbReference type="iPTMnet" id="O15047"/>
<dbReference type="PhosphoSitePlus" id="O15047"/>
<dbReference type="BioMuta" id="SETD1A"/>
<dbReference type="jPOST" id="O15047"/>
<dbReference type="MassIVE" id="O15047"/>
<dbReference type="PaxDb" id="9606-ENSP00000262519"/>
<dbReference type="PeptideAtlas" id="O15047"/>
<dbReference type="ProteomicsDB" id="48400"/>
<dbReference type="Pumba" id="O15047"/>
<dbReference type="Antibodypedia" id="13862">
    <property type="antibodies" value="217 antibodies from 27 providers"/>
</dbReference>
<dbReference type="DNASU" id="9739"/>
<dbReference type="Ensembl" id="ENST00000262519.14">
    <property type="protein sequence ID" value="ENSP00000262519.8"/>
    <property type="gene ID" value="ENSG00000099381.20"/>
</dbReference>
<dbReference type="Ensembl" id="ENST00000684162.1">
    <property type="protein sequence ID" value="ENSP00000507683.1"/>
    <property type="gene ID" value="ENSG00000099381.20"/>
</dbReference>
<dbReference type="Ensembl" id="ENST00000710314.1">
    <property type="protein sequence ID" value="ENSP00000518195.1"/>
    <property type="gene ID" value="ENSG00000099381.20"/>
</dbReference>
<dbReference type="GeneID" id="9739"/>
<dbReference type="KEGG" id="hsa:9739"/>
<dbReference type="MANE-Select" id="ENST00000262519.14">
    <property type="protein sequence ID" value="ENSP00000262519.8"/>
    <property type="RefSeq nucleotide sequence ID" value="NM_014712.3"/>
    <property type="RefSeq protein sequence ID" value="NP_055527.1"/>
</dbReference>
<dbReference type="UCSC" id="uc002ead.2">
    <property type="organism name" value="human"/>
</dbReference>
<dbReference type="AGR" id="HGNC:29010"/>
<dbReference type="CTD" id="9739"/>
<dbReference type="DisGeNET" id="9739"/>
<dbReference type="GeneCards" id="SETD1A"/>
<dbReference type="HGNC" id="HGNC:29010">
    <property type="gene designation" value="SETD1A"/>
</dbReference>
<dbReference type="HPA" id="ENSG00000099381">
    <property type="expression patterns" value="Low tissue specificity"/>
</dbReference>
<dbReference type="MalaCards" id="SETD1A"/>
<dbReference type="MIM" id="611052">
    <property type="type" value="gene"/>
</dbReference>
<dbReference type="MIM" id="618832">
    <property type="type" value="phenotype"/>
</dbReference>
<dbReference type="MIM" id="619056">
    <property type="type" value="phenotype"/>
</dbReference>
<dbReference type="neXtProt" id="NX_O15047"/>
<dbReference type="OpenTargets" id="ENSG00000099381"/>
<dbReference type="Orphanet" id="528084">
    <property type="disease" value="Non-specific syndromic intellectual disability"/>
</dbReference>
<dbReference type="PharmGKB" id="PA128394556"/>
<dbReference type="VEuPathDB" id="HostDB:ENSG00000099381"/>
<dbReference type="eggNOG" id="KOG1080">
    <property type="taxonomic scope" value="Eukaryota"/>
</dbReference>
<dbReference type="GeneTree" id="ENSGT00940000154575"/>
<dbReference type="HOGENOM" id="CLU_001226_2_0_1"/>
<dbReference type="InParanoid" id="O15047"/>
<dbReference type="OMA" id="KVSRYPD"/>
<dbReference type="OrthoDB" id="308383at2759"/>
<dbReference type="PAN-GO" id="O15047">
    <property type="GO annotations" value="3 GO annotations based on evolutionary models"/>
</dbReference>
<dbReference type="PhylomeDB" id="O15047"/>
<dbReference type="TreeFam" id="TF106436"/>
<dbReference type="BioCyc" id="MetaCyc:HS01894-MONOMER"/>
<dbReference type="BRENDA" id="2.1.1.354">
    <property type="organism ID" value="2681"/>
</dbReference>
<dbReference type="PathwayCommons" id="O15047"/>
<dbReference type="Reactome" id="R-HSA-3214841">
    <property type="pathway name" value="PKMTs methylate histone lysines"/>
</dbReference>
<dbReference type="Reactome" id="R-HSA-8936459">
    <property type="pathway name" value="RUNX1 regulates genes involved in megakaryocyte differentiation and platelet function"/>
</dbReference>
<dbReference type="Reactome" id="R-HSA-9772755">
    <property type="pathway name" value="Formation of WDR5-containing histone-modifying complexes"/>
</dbReference>
<dbReference type="SignaLink" id="O15047"/>
<dbReference type="SIGNOR" id="O15047"/>
<dbReference type="BioGRID-ORCS" id="9739">
    <property type="hits" value="752 hits in 1190 CRISPR screens"/>
</dbReference>
<dbReference type="CD-CODE" id="804901D1">
    <property type="entry name" value="Nuclear speckle"/>
</dbReference>
<dbReference type="ChiTaRS" id="SETD1A">
    <property type="organism name" value="human"/>
</dbReference>
<dbReference type="EvolutionaryTrace" id="O15047"/>
<dbReference type="GenomeRNAi" id="9739"/>
<dbReference type="Pharos" id="O15047">
    <property type="development level" value="Tbio"/>
</dbReference>
<dbReference type="PRO" id="PR:O15047"/>
<dbReference type="Proteomes" id="UP000005640">
    <property type="component" value="Chromosome 16"/>
</dbReference>
<dbReference type="RNAct" id="O15047">
    <property type="molecule type" value="protein"/>
</dbReference>
<dbReference type="Bgee" id="ENSG00000099381">
    <property type="expression patterns" value="Expressed in paraflocculus and 159 other cell types or tissues"/>
</dbReference>
<dbReference type="ExpressionAtlas" id="O15047">
    <property type="expression patterns" value="baseline and differential"/>
</dbReference>
<dbReference type="GO" id="GO:0000785">
    <property type="term" value="C:chromatin"/>
    <property type="evidence" value="ECO:0000314"/>
    <property type="project" value="ParkinsonsUK-UCL"/>
</dbReference>
<dbReference type="GO" id="GO:0005737">
    <property type="term" value="C:cytoplasm"/>
    <property type="evidence" value="ECO:0000314"/>
    <property type="project" value="UniProtKB"/>
</dbReference>
<dbReference type="GO" id="GO:0035097">
    <property type="term" value="C:histone methyltransferase complex"/>
    <property type="evidence" value="ECO:0000314"/>
    <property type="project" value="UniProtKB"/>
</dbReference>
<dbReference type="GO" id="GO:0016607">
    <property type="term" value="C:nuclear speck"/>
    <property type="evidence" value="ECO:0000314"/>
    <property type="project" value="UniProtKB"/>
</dbReference>
<dbReference type="GO" id="GO:0005654">
    <property type="term" value="C:nucleoplasm"/>
    <property type="evidence" value="ECO:0000304"/>
    <property type="project" value="Reactome"/>
</dbReference>
<dbReference type="GO" id="GO:0005634">
    <property type="term" value="C:nucleus"/>
    <property type="evidence" value="ECO:0000314"/>
    <property type="project" value="MGI"/>
</dbReference>
<dbReference type="GO" id="GO:0048188">
    <property type="term" value="C:Set1C/COMPASS complex"/>
    <property type="evidence" value="ECO:0000314"/>
    <property type="project" value="UniProtKB"/>
</dbReference>
<dbReference type="GO" id="GO:0008013">
    <property type="term" value="F:beta-catenin binding"/>
    <property type="evidence" value="ECO:0000353"/>
    <property type="project" value="BHF-UCL"/>
</dbReference>
<dbReference type="GO" id="GO:0042800">
    <property type="term" value="F:histone H3K4 methyltransferase activity"/>
    <property type="evidence" value="ECO:0000314"/>
    <property type="project" value="UniProtKB"/>
</dbReference>
<dbReference type="GO" id="GO:0140945">
    <property type="term" value="F:histone H3K4 monomethyltransferase activity"/>
    <property type="evidence" value="ECO:0007669"/>
    <property type="project" value="RHEA"/>
</dbReference>
<dbReference type="GO" id="GO:0140999">
    <property type="term" value="F:histone H3K4 trimethyltransferase activity"/>
    <property type="evidence" value="ECO:0007669"/>
    <property type="project" value="UniProtKB-EC"/>
</dbReference>
<dbReference type="GO" id="GO:0003723">
    <property type="term" value="F:RNA binding"/>
    <property type="evidence" value="ECO:0000314"/>
    <property type="project" value="UniProtKB"/>
</dbReference>
<dbReference type="GO" id="GO:0061629">
    <property type="term" value="F:RNA polymerase II-specific DNA-binding transcription factor binding"/>
    <property type="evidence" value="ECO:0000353"/>
    <property type="project" value="ParkinsonsUK-UCL"/>
</dbReference>
<dbReference type="GO" id="GO:0007420">
    <property type="term" value="P:brain development"/>
    <property type="evidence" value="ECO:0000315"/>
    <property type="project" value="UniProtKB"/>
</dbReference>
<dbReference type="GO" id="GO:0006974">
    <property type="term" value="P:DNA damage response"/>
    <property type="evidence" value="ECO:0007669"/>
    <property type="project" value="UniProtKB-KW"/>
</dbReference>
<dbReference type="GO" id="GO:0032259">
    <property type="term" value="P:methylation"/>
    <property type="evidence" value="ECO:0007669"/>
    <property type="project" value="UniProtKB-KW"/>
</dbReference>
<dbReference type="GO" id="GO:1902275">
    <property type="term" value="P:regulation of chromatin organization"/>
    <property type="evidence" value="ECO:0000314"/>
    <property type="project" value="ParkinsonsUK-UCL"/>
</dbReference>
<dbReference type="GO" id="GO:1902036">
    <property type="term" value="P:regulation of hematopoietic stem cell differentiation"/>
    <property type="evidence" value="ECO:0000314"/>
    <property type="project" value="ParkinsonsUK-UCL"/>
</dbReference>
<dbReference type="CDD" id="cd12548">
    <property type="entry name" value="RRM_Set1A"/>
    <property type="match status" value="1"/>
</dbReference>
<dbReference type="CDD" id="cd19169">
    <property type="entry name" value="SET_SETD1"/>
    <property type="match status" value="1"/>
</dbReference>
<dbReference type="FunFam" id="2.170.270.10:FF:000010">
    <property type="entry name" value="Histone-lysine N-methyltransferase"/>
    <property type="match status" value="1"/>
</dbReference>
<dbReference type="FunFam" id="3.30.70.330:FF:000178">
    <property type="entry name" value="Histone-lysine N-methyltransferase"/>
    <property type="match status" value="1"/>
</dbReference>
<dbReference type="Gene3D" id="3.30.70.330">
    <property type="match status" value="1"/>
</dbReference>
<dbReference type="Gene3D" id="2.170.270.10">
    <property type="entry name" value="SET domain"/>
    <property type="match status" value="1"/>
</dbReference>
<dbReference type="IDEAL" id="IID00358"/>
<dbReference type="InterPro" id="IPR024657">
    <property type="entry name" value="COMPASS_Set1_N-SET"/>
</dbReference>
<dbReference type="InterPro" id="IPR012677">
    <property type="entry name" value="Nucleotide-bd_a/b_plait_sf"/>
</dbReference>
<dbReference type="InterPro" id="IPR003616">
    <property type="entry name" value="Post-SET_dom"/>
</dbReference>
<dbReference type="InterPro" id="IPR035979">
    <property type="entry name" value="RBD_domain_sf"/>
</dbReference>
<dbReference type="InterPro" id="IPR000504">
    <property type="entry name" value="RRM_dom"/>
</dbReference>
<dbReference type="InterPro" id="IPR044570">
    <property type="entry name" value="Set1-like"/>
</dbReference>
<dbReference type="InterPro" id="IPR034467">
    <property type="entry name" value="Set1A_RRM"/>
</dbReference>
<dbReference type="InterPro" id="IPR001214">
    <property type="entry name" value="SET_dom"/>
</dbReference>
<dbReference type="InterPro" id="IPR046341">
    <property type="entry name" value="SET_dom_sf"/>
</dbReference>
<dbReference type="InterPro" id="IPR037841">
    <property type="entry name" value="SET_SETD1A/B"/>
</dbReference>
<dbReference type="PANTHER" id="PTHR45814">
    <property type="entry name" value="HISTONE-LYSINE N-METHYLTRANSFERASE SETD1"/>
    <property type="match status" value="1"/>
</dbReference>
<dbReference type="PANTHER" id="PTHR45814:SF3">
    <property type="entry name" value="HISTONE-LYSINE N-METHYLTRANSFERASE SETD1A"/>
    <property type="match status" value="1"/>
</dbReference>
<dbReference type="Pfam" id="PF11764">
    <property type="entry name" value="N-SET"/>
    <property type="match status" value="1"/>
</dbReference>
<dbReference type="Pfam" id="PF00076">
    <property type="entry name" value="RRM_1"/>
    <property type="match status" value="1"/>
</dbReference>
<dbReference type="Pfam" id="PF00856">
    <property type="entry name" value="SET"/>
    <property type="match status" value="1"/>
</dbReference>
<dbReference type="SMART" id="SM01291">
    <property type="entry name" value="N-SET"/>
    <property type="match status" value="1"/>
</dbReference>
<dbReference type="SMART" id="SM00508">
    <property type="entry name" value="PostSET"/>
    <property type="match status" value="1"/>
</dbReference>
<dbReference type="SMART" id="SM00360">
    <property type="entry name" value="RRM"/>
    <property type="match status" value="1"/>
</dbReference>
<dbReference type="SMART" id="SM00317">
    <property type="entry name" value="SET"/>
    <property type="match status" value="1"/>
</dbReference>
<dbReference type="SUPFAM" id="SSF54928">
    <property type="entry name" value="RNA-binding domain, RBD"/>
    <property type="match status" value="1"/>
</dbReference>
<dbReference type="SUPFAM" id="SSF82199">
    <property type="entry name" value="SET domain"/>
    <property type="match status" value="1"/>
</dbReference>
<dbReference type="PROSITE" id="PS50868">
    <property type="entry name" value="POST_SET"/>
    <property type="match status" value="1"/>
</dbReference>
<dbReference type="PROSITE" id="PS50102">
    <property type="entry name" value="RRM"/>
    <property type="match status" value="1"/>
</dbReference>
<dbReference type="PROSITE" id="PS50280">
    <property type="entry name" value="SET"/>
    <property type="match status" value="1"/>
</dbReference>
<evidence type="ECO:0000250" key="1">
    <source>
        <dbReference type="UniProtKB" id="E9PYH6"/>
    </source>
</evidence>
<evidence type="ECO:0000250" key="2">
    <source>
        <dbReference type="UniProtKB" id="P38827"/>
    </source>
</evidence>
<evidence type="ECO:0000255" key="3">
    <source>
        <dbReference type="PROSITE-ProRule" id="PRU00155"/>
    </source>
</evidence>
<evidence type="ECO:0000255" key="4">
    <source>
        <dbReference type="PROSITE-ProRule" id="PRU00176"/>
    </source>
</evidence>
<evidence type="ECO:0000255" key="5">
    <source>
        <dbReference type="PROSITE-ProRule" id="PRU00190"/>
    </source>
</evidence>
<evidence type="ECO:0000256" key="6">
    <source>
        <dbReference type="SAM" id="MobiDB-lite"/>
    </source>
</evidence>
<evidence type="ECO:0000269" key="7">
    <source>
    </source>
</evidence>
<evidence type="ECO:0000269" key="8">
    <source>
    </source>
</evidence>
<evidence type="ECO:0000269" key="9">
    <source>
    </source>
</evidence>
<evidence type="ECO:0000269" key="10">
    <source>
    </source>
</evidence>
<evidence type="ECO:0000269" key="11">
    <source>
    </source>
</evidence>
<evidence type="ECO:0000269" key="12">
    <source>
    </source>
</evidence>
<evidence type="ECO:0000269" key="13">
    <source>
    </source>
</evidence>
<evidence type="ECO:0000269" key="14">
    <source>
    </source>
</evidence>
<evidence type="ECO:0000269" key="15">
    <source>
    </source>
</evidence>
<evidence type="ECO:0000269" key="16">
    <source>
    </source>
</evidence>
<evidence type="ECO:0000269" key="17">
    <source>
    </source>
</evidence>
<evidence type="ECO:0000269" key="18">
    <source>
    </source>
</evidence>
<evidence type="ECO:0000269" key="19">
    <source>
    </source>
</evidence>
<evidence type="ECO:0000269" key="20">
    <source>
    </source>
</evidence>
<evidence type="ECO:0000269" key="21">
    <source>
    </source>
</evidence>
<evidence type="ECO:0000269" key="22">
    <source>
    </source>
</evidence>
<evidence type="ECO:0000305" key="23"/>
<evidence type="ECO:0000312" key="24">
    <source>
        <dbReference type="EMBL" id="AAH27450.1"/>
    </source>
</evidence>
<evidence type="ECO:0000312" key="25">
    <source>
        <dbReference type="EMBL" id="AAH35795.1"/>
    </source>
</evidence>
<evidence type="ECO:0000312" key="26">
    <source>
        <dbReference type="EMBL" id="BAA20797.2"/>
    </source>
</evidence>
<evidence type="ECO:0007744" key="27">
    <source>
        <dbReference type="PDB" id="3S8S"/>
    </source>
</evidence>
<evidence type="ECO:0007744" key="28">
    <source>
        <dbReference type="PDB" id="3UVN"/>
    </source>
</evidence>
<evidence type="ECO:0007744" key="29">
    <source>
        <dbReference type="PDB" id="4EWR"/>
    </source>
</evidence>
<evidence type="ECO:0007744" key="30">
    <source>
        <dbReference type="PDB" id="8ILY"/>
    </source>
</evidence>
<evidence type="ECO:0007744" key="31">
    <source>
    </source>
</evidence>
<evidence type="ECO:0007744" key="32">
    <source>
    </source>
</evidence>
<evidence type="ECO:0007744" key="33">
    <source>
    </source>
</evidence>
<evidence type="ECO:0007829" key="34">
    <source>
        <dbReference type="PDB" id="3S8S"/>
    </source>
</evidence>
<evidence type="ECO:0007829" key="35">
    <source>
        <dbReference type="PDB" id="4EWR"/>
    </source>
</evidence>
<evidence type="ECO:0007829" key="36">
    <source>
        <dbReference type="PDB" id="8ILY"/>
    </source>
</evidence>
<proteinExistence type="evidence at protein level"/>
<name>SET1A_HUMAN</name>
<organism>
    <name type="scientific">Homo sapiens</name>
    <name type="common">Human</name>
    <dbReference type="NCBI Taxonomy" id="9606"/>
    <lineage>
        <taxon>Eukaryota</taxon>
        <taxon>Metazoa</taxon>
        <taxon>Chordata</taxon>
        <taxon>Craniata</taxon>
        <taxon>Vertebrata</taxon>
        <taxon>Euteleostomi</taxon>
        <taxon>Mammalia</taxon>
        <taxon>Eutheria</taxon>
        <taxon>Euarchontoglires</taxon>
        <taxon>Primates</taxon>
        <taxon>Haplorrhini</taxon>
        <taxon>Catarrhini</taxon>
        <taxon>Hominidae</taxon>
        <taxon>Homo</taxon>
    </lineage>
</organism>
<sequence>MDQEGGGDGQKAPSFQWRNYKLIVDPALDPALRRPSQKVYRYDGVHFSVNDSKYIPVEDLQDPRCHVRSKNRDFSLPVPKFKLDEFYIGQIPLKEVTFARLNDNVRETFLKDMCRKYGEVEEVEILLHPRTRKHLGLARVLFTSTRGAKETVKNLHLTSVMGNIIHAQLDIKGQQRMKYYELIVNGSYTPQTVPTGGKALSEKFQGSGAATETAESRRRSSSDTAAYPAGTTAVGTPGNGTPCSQDTSFSSSRQDTPSSFGQFTPQSSQGTPYTSRGSTPYSQDSAYSSSTTSTSFKPRRSENSYQDAFSRRHFSASSASTTASTAIAATTAATASSSASSSSLSSSSSSSSSSSSSQFRSSDANYPAYYESWNRYQRHTSYPPRRATREEPPGAPFAENTAERFPPSYTSYLPPEPSRPTDQDYRPPASEAPPPEPPEPGGGGGGGGPSPEREEVRTSPRPASPARSGSPAPETTNESVPFAQHSSLDSRIEMLLKEQRSKFSFLASDTEEEEENSSMVLGARDTGSEVPSGSGHGPCTPPPAPANFEDVAPTGSGEPGATRESPKANGQNQASPCSSGDDMEISDDDRGGSPPPAPTPPQQPPPPPPPPPPPPPYLASLPLGYPPHQPAYLLPPRPDGPPPPEYPPPPPPPPHIYDFVNSLELMDRLGAQWGGMPMSFQMQTQMLTRLHQLRQGKGLIAASAGPPGGAFGEAFLPFPPPQEAAYGLPYALYAQGQEGRGAYSREAYHLPMPMAAEPLPSSSVSGEEARLPPREEAELAEGKTLPTAGTVGRVLAMLVQEMKSIMQRDLNRKMVENVAFGAFDQWWESKEEKAKPFQNAAKQQAKEEDKEKTKLKEPGLLSLVDWAKSGGTTGIEAFAFGSGLRGALRLPSFKVKRKEPSEISEASEEKRPRPSTPAEEDEDDPEQEKEAGEPGRPGTKPPKRDEERGKTQGKHRKSFALDSEGEEASQESSSEKDEEDDEEDEEDEDREEAVDTTKKETEVSDGEDEESDSSSKCSLYADSDGENDSTSDSESSSSSSSSSSSSSSSSSSSSSSSSESSSEDEEEEERPAALPSASPPPREVPVPTPAPVEVPVPERVAGSPVTPLPEQEASPARPAGPTEESPPSAPLRPPEPPAGPPAPAPRPDERPSSPIPLLPPPKKRRKTVSFSAIEVVPAPEPPPATPPQAKFPGPASRKAPRGVERTIRNLPLDHASLVKSWPEEVSRGGRSRAGGRGRLTEEEEAEPGTEVDLAVLADLALTPARRGLPALPAVEDSEATETSDEAERPRPLLSHILLEHNYALAVKPTPPAPALRPPEPVPAPAALFSSPADEVLEAPEVVVAEAEEPKPQQLQQQREEGEEEGEEEGEEEEEESSDSSSSSDGEGALRRRSLRSHARRRRPPPPPPPPPPRAYEPRSEFEQMTILYDIWNSGLDSEDMSYLRLTYERLLQQTSGADWLNDTHWVHHTITNLTTPKRKRRPQDGPREHQTGSARSEGYYPISKKEKDKYLDVCPVSARQLEGVDTQGTNRVLSERRSEQRRLLSAIGTSAIMDSDLLKLNQLKFRKKKLRFGRSRIHEWGLFAMEPIAADEMVIEYVGQNIRQMVADMREKRYVQEGIGSSYLFRVDHDTIIDATKCGNLARFINHCCTPNCYAKVITIESQKKIVIYSKQPIGVDEEITYDYKFPLEDNKIPCLCGTESCRGSLN</sequence>
<reference evidence="26" key="1">
    <citation type="journal article" date="1997" name="DNA Res.">
        <title>Prediction of the coding sequences of unidentified human genes. VII. The complete sequences of 100 new cDNA clones from brain which can code for large proteins in vitro.</title>
        <authorList>
            <person name="Nagase T."/>
            <person name="Ishikawa K."/>
            <person name="Nakajima D."/>
            <person name="Ohira M."/>
            <person name="Seki N."/>
            <person name="Miyajima N."/>
            <person name="Tanaka A."/>
            <person name="Kotani H."/>
            <person name="Nomura N."/>
            <person name="Ohara O."/>
        </authorList>
    </citation>
    <scope>NUCLEOTIDE SEQUENCE [LARGE SCALE MRNA]</scope>
    <source>
        <tissue evidence="26">Brain</tissue>
    </source>
</reference>
<reference key="2">
    <citation type="journal article" date="2004" name="Nature">
        <title>The sequence and analysis of duplication-rich human chromosome 16.</title>
        <authorList>
            <person name="Martin J."/>
            <person name="Han C."/>
            <person name="Gordon L.A."/>
            <person name="Terry A."/>
            <person name="Prabhakar S."/>
            <person name="She X."/>
            <person name="Xie G."/>
            <person name="Hellsten U."/>
            <person name="Chan Y.M."/>
            <person name="Altherr M."/>
            <person name="Couronne O."/>
            <person name="Aerts A."/>
            <person name="Bajorek E."/>
            <person name="Black S."/>
            <person name="Blumer H."/>
            <person name="Branscomb E."/>
            <person name="Brown N.C."/>
            <person name="Bruno W.J."/>
            <person name="Buckingham J.M."/>
            <person name="Callen D.F."/>
            <person name="Campbell C.S."/>
            <person name="Campbell M.L."/>
            <person name="Campbell E.W."/>
            <person name="Caoile C."/>
            <person name="Challacombe J.F."/>
            <person name="Chasteen L.A."/>
            <person name="Chertkov O."/>
            <person name="Chi H.C."/>
            <person name="Christensen M."/>
            <person name="Clark L.M."/>
            <person name="Cohn J.D."/>
            <person name="Denys M."/>
            <person name="Detter J.C."/>
            <person name="Dickson M."/>
            <person name="Dimitrijevic-Bussod M."/>
            <person name="Escobar J."/>
            <person name="Fawcett J.J."/>
            <person name="Flowers D."/>
            <person name="Fotopulos D."/>
            <person name="Glavina T."/>
            <person name="Gomez M."/>
            <person name="Gonzales E."/>
            <person name="Goodstein D."/>
            <person name="Goodwin L.A."/>
            <person name="Grady D.L."/>
            <person name="Grigoriev I."/>
            <person name="Groza M."/>
            <person name="Hammon N."/>
            <person name="Hawkins T."/>
            <person name="Haydu L."/>
            <person name="Hildebrand C.E."/>
            <person name="Huang W."/>
            <person name="Israni S."/>
            <person name="Jett J."/>
            <person name="Jewett P.B."/>
            <person name="Kadner K."/>
            <person name="Kimball H."/>
            <person name="Kobayashi A."/>
            <person name="Krawczyk M.-C."/>
            <person name="Leyba T."/>
            <person name="Longmire J.L."/>
            <person name="Lopez F."/>
            <person name="Lou Y."/>
            <person name="Lowry S."/>
            <person name="Ludeman T."/>
            <person name="Manohar C.F."/>
            <person name="Mark G.A."/>
            <person name="McMurray K.L."/>
            <person name="Meincke L.J."/>
            <person name="Morgan J."/>
            <person name="Moyzis R.K."/>
            <person name="Mundt M.O."/>
            <person name="Munk A.C."/>
            <person name="Nandkeshwar R.D."/>
            <person name="Pitluck S."/>
            <person name="Pollard M."/>
            <person name="Predki P."/>
            <person name="Parson-Quintana B."/>
            <person name="Ramirez L."/>
            <person name="Rash S."/>
            <person name="Retterer J."/>
            <person name="Ricke D.O."/>
            <person name="Robinson D.L."/>
            <person name="Rodriguez A."/>
            <person name="Salamov A."/>
            <person name="Saunders E.H."/>
            <person name="Scott D."/>
            <person name="Shough T."/>
            <person name="Stallings R.L."/>
            <person name="Stalvey M."/>
            <person name="Sutherland R.D."/>
            <person name="Tapia R."/>
            <person name="Tesmer J.G."/>
            <person name="Thayer N."/>
            <person name="Thompson L.S."/>
            <person name="Tice H."/>
            <person name="Torney D.C."/>
            <person name="Tran-Gyamfi M."/>
            <person name="Tsai M."/>
            <person name="Ulanovsky L.E."/>
            <person name="Ustaszewska A."/>
            <person name="Vo N."/>
            <person name="White P.S."/>
            <person name="Williams A.L."/>
            <person name="Wills P.L."/>
            <person name="Wu J.-R."/>
            <person name="Wu K."/>
            <person name="Yang J."/>
            <person name="DeJong P."/>
            <person name="Bruce D."/>
            <person name="Doggett N.A."/>
            <person name="Deaven L."/>
            <person name="Schmutz J."/>
            <person name="Grimwood J."/>
            <person name="Richardson P."/>
            <person name="Rokhsar D.S."/>
            <person name="Eichler E.E."/>
            <person name="Gilna P."/>
            <person name="Lucas S.M."/>
            <person name="Myers R.M."/>
            <person name="Rubin E.M."/>
            <person name="Pennacchio L.A."/>
        </authorList>
    </citation>
    <scope>NUCLEOTIDE SEQUENCE [LARGE SCALE GENOMIC DNA]</scope>
</reference>
<reference key="3">
    <citation type="journal article" date="2004" name="Genome Res.">
        <title>The status, quality, and expansion of the NIH full-length cDNA project: the Mammalian Gene Collection (MGC).</title>
        <authorList>
            <consortium name="The MGC Project Team"/>
        </authorList>
    </citation>
    <scope>NUCLEOTIDE SEQUENCE [LARGE SCALE MRNA] OF 1-248 AND 1239-1707</scope>
    <source>
        <tissue evidence="24">Brain</tissue>
        <tissue evidence="25">Duodenum</tissue>
    </source>
</reference>
<reference key="4">
    <citation type="journal article" date="2003" name="Genes Dev.">
        <title>Human Sin3 deacetylase and trithorax-related Set1/Ash2 histone H3-K4 methyltransferase are tethered together selectively by the cell-proliferation factor HCF-1.</title>
        <authorList>
            <person name="Wysocka J."/>
            <person name="Myers M.P."/>
            <person name="Laherty C.D."/>
            <person name="Eisenman R.N."/>
            <person name="Herr W."/>
        </authorList>
    </citation>
    <scope>FUNCTION</scope>
    <scope>INTERACTION WITH HCFC1</scope>
</reference>
<reference key="5">
    <citation type="journal article" date="2005" name="J. Biol. Chem.">
        <title>CpG-binding protein (CXXC finger protein 1) is a component of the mammalian Set1 histone H3-Lys4 methyltransferase complex, the analogue of the yeast Set1/COMPASS complex.</title>
        <authorList>
            <person name="Lee J.-H."/>
            <person name="Skalnik D.G."/>
        </authorList>
    </citation>
    <scope>IDENTIFICATION IN THE SET1 COMPLEX</scope>
</reference>
<reference key="6">
    <citation type="journal article" date="2006" name="Cell">
        <title>Global, in vivo, and site-specific phosphorylation dynamics in signaling networks.</title>
        <authorList>
            <person name="Olsen J.V."/>
            <person name="Blagoev B."/>
            <person name="Gnad F."/>
            <person name="Macek B."/>
            <person name="Kumar C."/>
            <person name="Mortensen P."/>
            <person name="Mann M."/>
        </authorList>
    </citation>
    <scope>IDENTIFICATION BY MASS SPECTROMETRY [LARGE SCALE ANALYSIS]</scope>
    <source>
        <tissue>Cervix carcinoma</tissue>
    </source>
</reference>
<reference key="7">
    <citation type="journal article" date="2007" name="J. Biol. Chem.">
        <title>Identification and characterization of the human Set1B histone H3-Lys4 methyltransferase complex.</title>
        <authorList>
            <person name="Lee J.-H."/>
            <person name="Tate C.M."/>
            <person name="You J.-S."/>
            <person name="Skalnik D.G."/>
        </authorList>
    </citation>
    <scope>SUBCELLULAR LOCATION</scope>
    <scope>IDENTIFICATION IN THE SET1 COMPLEX</scope>
</reference>
<reference key="8">
    <citation type="journal article" date="2008" name="Mol. Cell. Biol.">
        <title>Wdr82 is a C-terminal domain-binding protein that recruits the Setd1A Histone H3-Lys4 methyltransferase complex to transcription start sites of transcribed human genes.</title>
        <authorList>
            <person name="Lee J.H."/>
            <person name="Skalnik D.G."/>
        </authorList>
    </citation>
    <scope>IDENTIFICATION IN SET1 COMPLEX</scope>
    <scope>INTERACTION WITH ASH2L; RBBP5; CXXC1; HCFC1; WDR5; WDR82 AND POLR2A</scope>
</reference>
<reference key="9">
    <citation type="journal article" date="2008" name="Mol. Cell. Biol.">
        <title>Molecular regulation of H3K4 trimethylation by Wdr82, a component of human Set1/COMPASS.</title>
        <authorList>
            <person name="Wu M."/>
            <person name="Wang P.F."/>
            <person name="Lee J.S."/>
            <person name="Martin-Brown S."/>
            <person name="Florens L."/>
            <person name="Washburn M."/>
            <person name="Shilatifard A."/>
        </authorList>
    </citation>
    <scope>IDENTIFICATION IN SET1 COMPLEX</scope>
</reference>
<reference key="10">
    <citation type="journal article" date="2008" name="Proc. Natl. Acad. Sci. U.S.A.">
        <title>A quantitative atlas of mitotic phosphorylation.</title>
        <authorList>
            <person name="Dephoure N."/>
            <person name="Zhou C."/>
            <person name="Villen J."/>
            <person name="Beausoleil S.A."/>
            <person name="Bakalarski C.E."/>
            <person name="Elledge S.J."/>
            <person name="Gygi S.P."/>
        </authorList>
    </citation>
    <scope>IDENTIFICATION BY MASS SPECTROMETRY [LARGE SCALE ANALYSIS]</scope>
    <source>
        <tissue>Cervix carcinoma</tissue>
    </source>
</reference>
<reference key="11">
    <citation type="journal article" date="2009" name="Anal. Chem.">
        <title>Lys-N and trypsin cover complementary parts of the phosphoproteome in a refined SCX-based approach.</title>
        <authorList>
            <person name="Gauci S."/>
            <person name="Helbig A.O."/>
            <person name="Slijper M."/>
            <person name="Krijgsveld J."/>
            <person name="Heck A.J."/>
            <person name="Mohammed S."/>
        </authorList>
    </citation>
    <scope>IDENTIFICATION BY MASS SPECTROMETRY [LARGE SCALE ANALYSIS]</scope>
</reference>
<reference key="12">
    <citation type="journal article" date="2009" name="Sci. Signal.">
        <title>Quantitative phosphoproteomic analysis of T cell receptor signaling reveals system-wide modulation of protein-protein interactions.</title>
        <authorList>
            <person name="Mayya V."/>
            <person name="Lundgren D.H."/>
            <person name="Hwang S.-I."/>
            <person name="Rezaul K."/>
            <person name="Wu L."/>
            <person name="Eng J.K."/>
            <person name="Rodionov V."/>
            <person name="Han D.K."/>
        </authorList>
    </citation>
    <scope>PHOSPHORYLATION [LARGE SCALE ANALYSIS] AT SER-508</scope>
    <scope>IDENTIFICATION BY MASS SPECTROMETRY [LARGE SCALE ANALYSIS]</scope>
    <source>
        <tissue>Leukemic T-cell</tissue>
    </source>
</reference>
<reference key="13">
    <citation type="journal article" date="2011" name="BMC Syst. Biol.">
        <title>Initial characterization of the human central proteome.</title>
        <authorList>
            <person name="Burkard T.R."/>
            <person name="Planyavsky M."/>
            <person name="Kaupe I."/>
            <person name="Breitwieser F.P."/>
            <person name="Buerckstuemmer T."/>
            <person name="Bennett K.L."/>
            <person name="Superti-Furga G."/>
            <person name="Colinge J."/>
        </authorList>
    </citation>
    <scope>IDENTIFICATION BY MASS SPECTROMETRY [LARGE SCALE ANALYSIS]</scope>
</reference>
<reference key="14">
    <citation type="journal article" date="2011" name="Sci. Signal.">
        <title>System-wide temporal characterization of the proteome and phosphoproteome of human embryonic stem cell differentiation.</title>
        <authorList>
            <person name="Rigbolt K.T."/>
            <person name="Prokhorova T.A."/>
            <person name="Akimov V."/>
            <person name="Henningsen J."/>
            <person name="Johansen P.T."/>
            <person name="Kratchmarova I."/>
            <person name="Kassem M."/>
            <person name="Mann M."/>
            <person name="Olsen J.V."/>
            <person name="Blagoev B."/>
        </authorList>
    </citation>
    <scope>IDENTIFICATION BY MASS SPECTROMETRY [LARGE SCALE ANALYSIS]</scope>
</reference>
<reference key="15">
    <citation type="journal article" date="2012" name="Cell">
        <title>Microcephaly gene links trithorax and REST/NRSF to control neural stem cell proliferation and differentiation.</title>
        <authorList>
            <person name="Yang Y.J."/>
            <person name="Baltus A.E."/>
            <person name="Mathew R.S."/>
            <person name="Murphy E.A."/>
            <person name="Evrony G.D."/>
            <person name="Gonzalez D.M."/>
            <person name="Wang E.P."/>
            <person name="Marshall-Walker C.A."/>
            <person name="Barry B.J."/>
            <person name="Murn J."/>
            <person name="Tatarakis A."/>
            <person name="Mahajan M.A."/>
            <person name="Samuels H.H."/>
            <person name="Shi Y."/>
            <person name="Golden J.A."/>
            <person name="Mahajnah M."/>
            <person name="Shenhav R."/>
            <person name="Walsh C.A."/>
        </authorList>
    </citation>
    <scope>INTERACTION WITH ZNF335</scope>
</reference>
<reference key="16">
    <citation type="journal article" date="2012" name="J. Biol. Chem.">
        <title>The histone chaperone Spt6 is required for activation-induced cytidine deaminase target determination through H3K4me3 regulation.</title>
        <authorList>
            <person name="Begum N.A."/>
            <person name="Stanlie A."/>
            <person name="Nakata M."/>
            <person name="Akiyama H."/>
            <person name="Honjo T."/>
        </authorList>
    </citation>
    <scope>INTERACTION WITH SUPT6H</scope>
</reference>
<reference key="17">
    <citation type="journal article" date="2013" name="J. Proteome Res.">
        <title>Toward a comprehensive characterization of a human cancer cell phosphoproteome.</title>
        <authorList>
            <person name="Zhou H."/>
            <person name="Di Palma S."/>
            <person name="Preisinger C."/>
            <person name="Peng M."/>
            <person name="Polat A.N."/>
            <person name="Heck A.J."/>
            <person name="Mohammed S."/>
        </authorList>
    </citation>
    <scope>PHOSPHORYLATION [LARGE SCALE ANALYSIS] AT SER-459; SER-464; SER-565 AND SER-915</scope>
    <scope>IDENTIFICATION BY MASS SPECTROMETRY [LARGE SCALE ANALYSIS]</scope>
    <source>
        <tissue>Cervix carcinoma</tissue>
        <tissue>Erythroleukemia</tissue>
    </source>
</reference>
<reference key="18">
    <citation type="journal article" date="2013" name="Mol. Cell. Biol.">
        <title>Quantitative dissection and stoichiometry determination of the human SET1/MLL histone methyltransferase complexes.</title>
        <authorList>
            <person name="van Nuland R."/>
            <person name="Smits A.H."/>
            <person name="Pallaki P."/>
            <person name="Jansen P.W."/>
            <person name="Vermeulen M."/>
            <person name="Timmers H.T."/>
        </authorList>
    </citation>
    <scope>IDENTIFICATION IN SET1A COMPLEX</scope>
</reference>
<reference key="19">
    <citation type="journal article" date="2014" name="J. Proteomics">
        <title>An enzyme assisted RP-RPLC approach for in-depth analysis of human liver phosphoproteome.</title>
        <authorList>
            <person name="Bian Y."/>
            <person name="Song C."/>
            <person name="Cheng K."/>
            <person name="Dong M."/>
            <person name="Wang F."/>
            <person name="Huang J."/>
            <person name="Sun D."/>
            <person name="Wang L."/>
            <person name="Ye M."/>
            <person name="Zou H."/>
        </authorList>
    </citation>
    <scope>PHOSPHORYLATION [LARGE SCALE ANALYSIS] AT SER-1103</scope>
    <scope>IDENTIFICATION BY MASS SPECTROMETRY [LARGE SCALE ANALYSIS]</scope>
    <source>
        <tissue>Liver</tissue>
    </source>
</reference>
<reference key="20">
    <citation type="journal article" date="2015" name="J. Biol. Chem.">
        <title>Biochemical reconstitution and phylogenetic comparison of human SET1 family core complexes involved in histone methylation.</title>
        <authorList>
            <person name="Shinsky S.A."/>
            <person name="Monteith K.E."/>
            <person name="Viggiano S."/>
            <person name="Cosgrove M.S."/>
        </authorList>
    </citation>
    <scope>FUNCTION</scope>
    <scope>CATALYTIC ACTIVITY</scope>
    <scope>SUBUNIT</scope>
    <scope>MUTAGENESIS OF ASN-1646</scope>
</reference>
<reference key="21">
    <citation type="journal article" date="2023" name="Int. J. Mol. Sci.">
        <title>In Vivo and In Vitro Characterization of the RNA Binding Capacity of SETD1A (KMT2F).</title>
        <authorList>
            <person name="Amin H.M."/>
            <person name="Szabo B."/>
            <person name="Abukhairan R."/>
            <person name="Zeke A."/>
            <person name="Kardos J."/>
            <person name="Schad E."/>
            <person name="Tantos A."/>
        </authorList>
    </citation>
    <scope>FUNCTION</scope>
    <scope>SUBCELLULAR LOCATION</scope>
    <scope>DOMAIN RRM</scope>
</reference>
<reference key="22">
    <citation type="journal article" date="2018" name="Mol. Cell">
        <title>Histone Methylation by SETD1A Protects Nascent DNA through the Nucleosome Chaperone Activity of FANCD2.</title>
        <authorList>
            <person name="Higgs M.R."/>
            <person name="Sato K."/>
            <person name="Reynolds J.J."/>
            <person name="Begum S."/>
            <person name="Bayley R."/>
            <person name="Goula A."/>
            <person name="Vernet A."/>
            <person name="Paquin K.L."/>
            <person name="Skalnik D.G."/>
            <person name="Kobayashi W."/>
            <person name="Takata M."/>
            <person name="Howlett N.G."/>
            <person name="Kurumizaka H."/>
            <person name="Kimura H."/>
            <person name="Stewart G.S."/>
        </authorList>
    </citation>
    <scope>FUNCTION</scope>
    <scope>CATALYTIC ACTIVITY</scope>
    <scope>INTERACTION WITH BOD1L1</scope>
</reference>
<reference key="23">
    <citation type="journal article" date="2019" name="Neurosci. Bull.">
        <title>De novo and inherited SETD1A variants in early-onset epilepsy.</title>
        <authorList>
            <person name="Yu X."/>
            <person name="Yang L."/>
            <person name="Li J."/>
            <person name="Li W."/>
            <person name="Li D."/>
            <person name="Wang R."/>
            <person name="Wu K."/>
            <person name="Chen W."/>
            <person name="Zhang Y."/>
            <person name="Qiu Z."/>
            <person name="Zhou W."/>
        </authorList>
    </citation>
    <scope>INVOLVEMENT IN EPEO2</scope>
    <scope>VARIANTS EPEO2 ARG-269; CYS-913; ARG-1369 AND HIS-1392</scope>
    <scope>CHARACTERIZATION OF VARIANTS EPEO2 ARG-269; CYS-913; ARG-1369 AND HIS-1392</scope>
    <scope>FUNCTION</scope>
</reference>
<reference key="24">
    <citation type="journal article" date="2021" name="Mol. Psychiatry">
        <title>Characterization of SETD1A haploinsufficiency in humans and Drosophila defines a novel neurodevelopmental syndrome.</title>
        <authorList>
            <person name="Kummeling J."/>
            <person name="Stremmelaar D.E."/>
            <person name="Raun N."/>
            <person name="Reijnders M.R.F."/>
            <person name="Willemsen M.H."/>
            <person name="Ruiterkamp-Versteeg M."/>
            <person name="Schepens M."/>
            <person name="Man C.C.O."/>
            <person name="Gilissen C."/>
            <person name="Cho M.T."/>
            <person name="McWalter K."/>
            <person name="Sinnema M."/>
            <person name="Wheless J.W."/>
            <person name="Simon M.E.H."/>
            <person name="Genetti C.A."/>
            <person name="Casey A.M."/>
            <person name="Terhal P.A."/>
            <person name="van der Smagt J.J."/>
            <person name="van Gassen K.L.I."/>
            <person name="Joset P."/>
            <person name="Bahr A."/>
            <person name="Steindl K."/>
            <person name="Rauch A."/>
            <person name="Keller E."/>
            <person name="Raas-Rothschild A."/>
            <person name="Koolen D.A."/>
            <person name="Agrawal P.B."/>
            <person name="Hoffman T.L."/>
            <person name="Powell-Hamilton N.N."/>
            <person name="Thiffault I."/>
            <person name="Engleman K."/>
            <person name="Zhou D."/>
            <person name="Bodamer O."/>
            <person name="Hoefele J."/>
            <person name="Riedhammer K.M."/>
            <person name="Schwaibold E.M.C."/>
            <person name="Tasic V."/>
            <person name="Schubert D."/>
            <person name="Top D."/>
            <person name="Pfundt R."/>
            <person name="Higgs M.R."/>
            <person name="Kramer J.M."/>
            <person name="Kleefstra T."/>
        </authorList>
    </citation>
    <scope>INVOLVEMENT IN NEDSID</scope>
    <scope>VARIANTS NEDSID 37-GLN--ASN-1707 DEL; 455-GLU--ASN-1707 DEL; 499-GLN--ASN-1707 DEL; 909-GLU--ASN-1707 DEL; 990-ARG--ASN-1707 DEL AND ASP-1499</scope>
    <scope>CHARACTERIZATION OF VARIANT ASP-1499</scope>
    <scope>FUNCTION</scope>
</reference>
<reference evidence="27" key="25">
    <citation type="submission" date="2011-05" db="PDB data bank">
        <title>Crystal structure of the RRM domain of human SETD1A.</title>
        <authorList>
            <person name="Chao X."/>
            <person name="Tempel W."/>
            <person name="Bian C."/>
            <person name="Cerovina T."/>
            <person name="Walker J.R."/>
            <person name="Bountra C."/>
            <person name="Weigelt J."/>
            <person name="Arrowsmith C.H."/>
            <person name="Edwards A.M."/>
            <person name="Min J."/>
        </authorList>
    </citation>
    <scope>X-RAY CRYSTALLOGRAPHY (1.30 ANGSTROMS) OF 89-197</scope>
</reference>
<reference evidence="29" key="26">
    <citation type="journal article" date="2012" name="J. Biol. Chem.">
        <title>Structural basis for WDR5 interaction (Win) motif recognition in human SET1 family histone methyltransferases.</title>
        <authorList>
            <person name="Dharmarajan V."/>
            <person name="Lee J.H."/>
            <person name="Patel A."/>
            <person name="Skalnik D.G."/>
            <person name="Cosgrove M.S."/>
        </authorList>
    </citation>
    <scope>X-RAY CRYSTALLOGRAPHY (1.50 ANGSTROMS) OF 1488-1501 IN COMPLEX WITH WDR5</scope>
    <scope>INTERACTION WITH WDR5</scope>
    <scope>MOTIF WIN</scope>
</reference>
<reference evidence="28" key="27">
    <citation type="journal article" date="2012" name="Nucleic Acids Res.">
        <title>The plasticity of WDR5 peptide-binding cleft enables the binding of the SET1 family of histone methyltransferases.</title>
        <authorList>
            <person name="Zhang P."/>
            <person name="Lee H."/>
            <person name="Brunzelle J.S."/>
            <person name="Couture J.F."/>
        </authorList>
    </citation>
    <scope>X-RAY CRYSTALLOGRAPHY (1.79 ANGSTROMS) OF 1492-1502 IN COMPLEX WITH WDR5</scope>
    <scope>INTERACTION WITH WDR5</scope>
    <scope>MOTIF WIN</scope>
</reference>
<reference evidence="30" key="28">
    <citation type="journal article" date="2023" name="Biochem. Biophys. Res. Commun.">
        <title>Molecular insight into the SETD1A/B N-terminal region and its interaction with WDR82.</title>
        <authorList>
            <person name="Bao S."/>
            <person name="Xu C."/>
        </authorList>
    </citation>
    <scope>X-RAY CRYSTALLOGRAPHY (1.70 ANGSTROMS) OF 89-195</scope>
    <scope>INTERACTION WITH WDR82</scope>
</reference>
<accession>O15047</accession>
<accession>A0A804HLA6</accession>
<accession>A6NP62</accession>
<accession>Q6PIF3</accession>
<accession>Q8TAJ6</accession>
<keyword id="KW-0002">3D-structure</keyword>
<keyword id="KW-0010">Activator</keyword>
<keyword id="KW-0156">Chromatin regulator</keyword>
<keyword id="KW-0158">Chromosome</keyword>
<keyword id="KW-0963">Cytoplasm</keyword>
<keyword id="KW-0225">Disease variant</keyword>
<keyword id="KW-0227">DNA damage</keyword>
<keyword id="KW-0887">Epilepsy</keyword>
<keyword id="KW-0991">Intellectual disability</keyword>
<keyword id="KW-0489">Methyltransferase</keyword>
<keyword id="KW-0539">Nucleus</keyword>
<keyword id="KW-0597">Phosphoprotein</keyword>
<keyword id="KW-1267">Proteomics identification</keyword>
<keyword id="KW-1185">Reference proteome</keyword>
<keyword id="KW-0694">RNA-binding</keyword>
<keyword id="KW-0949">S-adenosyl-L-methionine</keyword>
<keyword id="KW-0804">Transcription</keyword>
<keyword id="KW-0805">Transcription regulation</keyword>
<keyword id="KW-0808">Transferase</keyword>
<protein>
    <recommendedName>
        <fullName>Histone-lysine N-methyltransferase SETD1A</fullName>
        <ecNumber evidence="17 18">2.1.1.364</ecNumber>
    </recommendedName>
    <alternativeName>
        <fullName>Lysine N-methyltransferase 2F</fullName>
    </alternativeName>
    <alternativeName>
        <fullName>SET domain-containing protein 1A</fullName>
        <shortName>hSET1A</shortName>
    </alternativeName>
    <alternativeName>
        <fullName>Set1/Ash2 histone methyltransferase complex subunit SET1</fullName>
    </alternativeName>
</protein>
<feature type="chain" id="PRO_0000186056" description="Histone-lysine N-methyltransferase SETD1A">
    <location>
        <begin position="1"/>
        <end position="1707"/>
    </location>
</feature>
<feature type="domain" description="RRM" evidence="4">
    <location>
        <begin position="84"/>
        <end position="172"/>
    </location>
</feature>
<feature type="domain" description="SET" evidence="5">
    <location>
        <begin position="1568"/>
        <end position="1685"/>
    </location>
</feature>
<feature type="domain" description="Post-SET" evidence="3">
    <location>
        <begin position="1691"/>
        <end position="1707"/>
    </location>
</feature>
<feature type="region of interest" description="Interaction with WDR82" evidence="21">
    <location>
        <begin position="60"/>
        <end position="89"/>
    </location>
</feature>
<feature type="region of interest" description="Disordered" evidence="6">
    <location>
        <begin position="194"/>
        <end position="308"/>
    </location>
</feature>
<feature type="region of interest" description="Disordered" evidence="6">
    <location>
        <begin position="331"/>
        <end position="363"/>
    </location>
</feature>
<feature type="region of interest" description="Disordered" evidence="6">
    <location>
        <begin position="381"/>
        <end position="486"/>
    </location>
</feature>
<feature type="region of interest" description="Disordered" evidence="6">
    <location>
        <begin position="506"/>
        <end position="655"/>
    </location>
</feature>
<feature type="region of interest" description="Disordered" evidence="6">
    <location>
        <begin position="834"/>
        <end position="854"/>
    </location>
</feature>
<feature type="region of interest" description="Disordered" evidence="6">
    <location>
        <begin position="891"/>
        <end position="1251"/>
    </location>
</feature>
<feature type="region of interest" description="Disordered" evidence="6">
    <location>
        <begin position="1264"/>
        <end position="1293"/>
    </location>
</feature>
<feature type="region of interest" description="Disordered" evidence="6">
    <location>
        <begin position="1307"/>
        <end position="1417"/>
    </location>
</feature>
<feature type="region of interest" description="Interaction with CFP1">
    <location>
        <begin position="1415"/>
        <end position="1450"/>
    </location>
</feature>
<feature type="region of interest" description="Interaction with ASH2L, RBBP5 and WDR5" evidence="10">
    <location>
        <begin position="1450"/>
        <end position="1537"/>
    </location>
</feature>
<feature type="region of interest" description="Disordered" evidence="6">
    <location>
        <begin position="1472"/>
        <end position="1499"/>
    </location>
</feature>
<feature type="short sequence motif" description="HCFC1-binding motif (HBM)">
    <location>
        <begin position="1299"/>
        <end position="1303"/>
    </location>
</feature>
<feature type="short sequence motif" description="WDR5 interaction motif (WIN)" evidence="12 13">
    <location>
        <begin position="1492"/>
        <end position="1497"/>
    </location>
</feature>
<feature type="short sequence motif" description="RxxxRR motif" evidence="2">
    <location>
        <begin position="1537"/>
        <end position="1542"/>
    </location>
</feature>
<feature type="compositionally biased region" description="Polar residues" evidence="6">
    <location>
        <begin position="239"/>
        <end position="277"/>
    </location>
</feature>
<feature type="compositionally biased region" description="Low complexity" evidence="6">
    <location>
        <begin position="278"/>
        <end position="295"/>
    </location>
</feature>
<feature type="compositionally biased region" description="Low complexity" evidence="6">
    <location>
        <begin position="331"/>
        <end position="357"/>
    </location>
</feature>
<feature type="compositionally biased region" description="Pro residues" evidence="6">
    <location>
        <begin position="430"/>
        <end position="440"/>
    </location>
</feature>
<feature type="compositionally biased region" description="Low complexity" evidence="6">
    <location>
        <begin position="459"/>
        <end position="473"/>
    </location>
</feature>
<feature type="compositionally biased region" description="Polar residues" evidence="6">
    <location>
        <begin position="474"/>
        <end position="486"/>
    </location>
</feature>
<feature type="compositionally biased region" description="Polar residues" evidence="6">
    <location>
        <begin position="568"/>
        <end position="578"/>
    </location>
</feature>
<feature type="compositionally biased region" description="Pro residues" evidence="6">
    <location>
        <begin position="593"/>
        <end position="617"/>
    </location>
</feature>
<feature type="compositionally biased region" description="Pro residues" evidence="6">
    <location>
        <begin position="624"/>
        <end position="655"/>
    </location>
</feature>
<feature type="compositionally biased region" description="Basic and acidic residues" evidence="6">
    <location>
        <begin position="844"/>
        <end position="854"/>
    </location>
</feature>
<feature type="compositionally biased region" description="Acidic residues" evidence="6">
    <location>
        <begin position="918"/>
        <end position="927"/>
    </location>
</feature>
<feature type="compositionally biased region" description="Acidic residues" evidence="6">
    <location>
        <begin position="976"/>
        <end position="992"/>
    </location>
</feature>
<feature type="compositionally biased region" description="Basic and acidic residues" evidence="6">
    <location>
        <begin position="993"/>
        <end position="1002"/>
    </location>
</feature>
<feature type="compositionally biased region" description="Acidic residues" evidence="6">
    <location>
        <begin position="1003"/>
        <end position="1012"/>
    </location>
</feature>
<feature type="compositionally biased region" description="Low complexity" evidence="6">
    <location>
        <begin position="1032"/>
        <end position="1060"/>
    </location>
</feature>
<feature type="compositionally biased region" description="Pro residues" evidence="6">
    <location>
        <begin position="1077"/>
        <end position="1094"/>
    </location>
</feature>
<feature type="compositionally biased region" description="Pro residues" evidence="6">
    <location>
        <begin position="1127"/>
        <end position="1145"/>
    </location>
</feature>
<feature type="compositionally biased region" description="Acidic residues" evidence="6">
    <location>
        <begin position="1275"/>
        <end position="1284"/>
    </location>
</feature>
<feature type="compositionally biased region" description="Pro residues" evidence="6">
    <location>
        <begin position="1308"/>
        <end position="1323"/>
    </location>
</feature>
<feature type="compositionally biased region" description="Acidic residues" evidence="6">
    <location>
        <begin position="1360"/>
        <end position="1377"/>
    </location>
</feature>
<feature type="compositionally biased region" description="Basic residues" evidence="6">
    <location>
        <begin position="1390"/>
        <end position="1403"/>
    </location>
</feature>
<feature type="compositionally biased region" description="Pro residues" evidence="6">
    <location>
        <begin position="1404"/>
        <end position="1414"/>
    </location>
</feature>
<feature type="binding site" evidence="5">
    <location>
        <position position="1684"/>
    </location>
    <ligand>
        <name>S-adenosyl-L-methionine</name>
        <dbReference type="ChEBI" id="CHEBI:59789"/>
    </ligand>
</feature>
<feature type="modified residue" description="Phosphoserine" evidence="32">
    <location>
        <position position="459"/>
    </location>
</feature>
<feature type="modified residue" description="Phosphoserine" evidence="32">
    <location>
        <position position="464"/>
    </location>
</feature>
<feature type="modified residue" description="Phosphoserine" evidence="31">
    <location>
        <position position="508"/>
    </location>
</feature>
<feature type="modified residue" description="Phosphoserine" evidence="32">
    <location>
        <position position="565"/>
    </location>
</feature>
<feature type="modified residue" description="Phosphoserine" evidence="32">
    <location>
        <position position="915"/>
    </location>
</feature>
<feature type="modified residue" description="Phosphoserine" evidence="33">
    <location>
        <position position="1103"/>
    </location>
</feature>
<feature type="sequence variant" id="VAR_085029" description="In NEDSID." evidence="20">
    <location>
        <begin position="37"/>
        <end position="1707"/>
    </location>
</feature>
<feature type="sequence variant" id="VAR_083962" description="In EPEO2; affects the development of synapses in a mouse model overexpressing the human protein harboring this variant." evidence="19">
    <original>Q</original>
    <variation>R</variation>
    <location>
        <position position="269"/>
    </location>
</feature>
<feature type="sequence variant" id="VAR_085030" description="In NEDSID." evidence="20">
    <location>
        <begin position="455"/>
        <end position="1707"/>
    </location>
</feature>
<feature type="sequence variant" id="VAR_085031" description="In NEDSID." evidence="20">
    <location>
        <begin position="499"/>
        <end position="1707"/>
    </location>
</feature>
<feature type="sequence variant" id="VAR_059318" description="In dbSNP:rs897985.">
    <original>D</original>
    <variation>N</variation>
    <location>
        <position position="639"/>
    </location>
</feature>
<feature type="sequence variant" id="VAR_085032" description="In NEDSID." evidence="20">
    <location>
        <begin position="909"/>
        <end position="1707"/>
    </location>
</feature>
<feature type="sequence variant" id="VAR_083963" description="In EPEO2; affects the development of synapses in a mouse model overexpressing the human protein harboring this variant." evidence="19">
    <original>R</original>
    <variation>C</variation>
    <location>
        <position position="913"/>
    </location>
</feature>
<feature type="sequence variant" id="VAR_085033" description="In NEDSID." evidence="20">
    <location>
        <begin position="990"/>
        <end position="1707"/>
    </location>
</feature>
<feature type="sequence variant" id="VAR_083964" description="In EPEO2; affects the development of synapses in a mouse model overexpressing the human protein harboring this variant; dbSNP:rs781482552." evidence="19">
    <original>G</original>
    <variation>R</variation>
    <location>
        <position position="1369"/>
    </location>
</feature>
<feature type="sequence variant" id="VAR_083965" description="In EPEO2; affects the development of synapses in a mouse model overexpressing the human protein harboring this variant; dbSNP:rs772206552." evidence="19">
    <original>R</original>
    <variation>H</variation>
    <location>
        <position position="1392"/>
    </location>
</feature>
<feature type="sequence variant" id="VAR_085008" description="In NEDSID; causes DNA damage repair defects associated with nucleolytic degradation of nascent DNA at stalled replication forks." evidence="20">
    <original>Y</original>
    <variation>D</variation>
    <location>
        <position position="1499"/>
    </location>
</feature>
<feature type="mutagenesis site" description="Abolishes interaction with S-adenosyl-L-methionine." evidence="17">
    <original>N</original>
    <variation>A</variation>
    <location>
        <position position="1646"/>
    </location>
</feature>
<feature type="sequence conflict" description="In Ref. 3; AAH35795." evidence="23" ref="3">
    <original>PCSQDTS</original>
    <variation>ACPVTHV</variation>
    <location>
        <begin position="242"/>
        <end position="248"/>
    </location>
</feature>
<feature type="sequence conflict" description="In Ref. 3; AAH27450." evidence="23" ref="3">
    <original>TEE</original>
    <variation>FLG</variation>
    <location>
        <begin position="1240"/>
        <end position="1242"/>
    </location>
</feature>
<feature type="strand" evidence="36">
    <location>
        <begin position="89"/>
        <end position="91"/>
    </location>
</feature>
<feature type="strand" evidence="34">
    <location>
        <begin position="95"/>
        <end position="100"/>
    </location>
</feature>
<feature type="helix" evidence="34">
    <location>
        <begin position="107"/>
        <end position="114"/>
    </location>
</feature>
<feature type="turn" evidence="34">
    <location>
        <begin position="115"/>
        <end position="117"/>
    </location>
</feature>
<feature type="strand" evidence="34">
    <location>
        <begin position="120"/>
        <end position="127"/>
    </location>
</feature>
<feature type="turn" evidence="34">
    <location>
        <begin position="129"/>
        <end position="131"/>
    </location>
</feature>
<feature type="strand" evidence="34">
    <location>
        <begin position="134"/>
        <end position="144"/>
    </location>
</feature>
<feature type="helix" evidence="34">
    <location>
        <begin position="145"/>
        <end position="155"/>
    </location>
</feature>
<feature type="strand" evidence="34">
    <location>
        <begin position="166"/>
        <end position="169"/>
    </location>
</feature>
<feature type="helix" evidence="34">
    <location>
        <begin position="174"/>
        <end position="184"/>
    </location>
</feature>
<feature type="turn" evidence="34">
    <location>
        <begin position="190"/>
        <end position="192"/>
    </location>
</feature>
<feature type="helix" evidence="35">
    <location>
        <begin position="1494"/>
        <end position="1497"/>
    </location>
</feature>
<comment type="function">
    <text evidence="1 7 17 18 19 20 22">Histone methyltransferase that catalyzes methyl group transfer from S-adenosyl-L-methionine to the epsilon-amino group of 'Lys-4' of histone H3 (H3K4) via a non-processive mechanism (PubMed:12670868, PubMed:25561738). Part of chromatin remodeling machinery, forms H3K4me1, H3K4me2 and H3K4me3 methylation marks at active chromatin sites where transcription and DNA repair take place (PubMed:29937342, PubMed:31197650, PubMed:32346159). Responsible for H3K4me3 enriched promoters and transcriptional programming of inner mass stem cells and neuron progenitors during embryogenesis (By similarity) (PubMed:31197650). Required for H3K4me1 mark at stalled replication forks. Mediates FANCD2-dependent nucleosome remodeling and RAD51 nucleofilaments stabilization at reversed forks, protecting them from nucleolytic degradation (PubMed:29937342, PubMed:32346159). Does not methylate 'Lys-4' of histone H3 if the neighboring 'Lys-9' residue is already methylated (PubMed:12670868). Binds RNAs involved in RNA processing and the DNA damage response (PubMed:38003223).</text>
</comment>
<comment type="catalytic activity">
    <reaction evidence="17 18">
        <text>L-lysyl(4)-[histone H3] + S-adenosyl-L-methionine = N(6)-methyl-L-lysyl(4)-[histone H3] + S-adenosyl-L-homocysteine + H(+)</text>
        <dbReference type="Rhea" id="RHEA:60264"/>
        <dbReference type="Rhea" id="RHEA-COMP:15543"/>
        <dbReference type="Rhea" id="RHEA-COMP:15547"/>
        <dbReference type="ChEBI" id="CHEBI:15378"/>
        <dbReference type="ChEBI" id="CHEBI:29969"/>
        <dbReference type="ChEBI" id="CHEBI:57856"/>
        <dbReference type="ChEBI" id="CHEBI:59789"/>
        <dbReference type="ChEBI" id="CHEBI:61929"/>
        <dbReference type="EC" id="2.1.1.364"/>
    </reaction>
    <physiologicalReaction direction="left-to-right" evidence="17 18">
        <dbReference type="Rhea" id="RHEA:60265"/>
    </physiologicalReaction>
</comment>
<comment type="catalytic activity">
    <reaction evidence="17">
        <text>N(6)-methyl-L-lysyl(4)-[histone H3] + S-adenosyl-L-methionine = N(6),N(6)-dimethyl-L-lysyl(4)-[histone H3] + S-adenosyl-L-homocysteine + H(+)</text>
        <dbReference type="Rhea" id="RHEA:60268"/>
        <dbReference type="Rhea" id="RHEA-COMP:15540"/>
        <dbReference type="Rhea" id="RHEA-COMP:15543"/>
        <dbReference type="ChEBI" id="CHEBI:15378"/>
        <dbReference type="ChEBI" id="CHEBI:57856"/>
        <dbReference type="ChEBI" id="CHEBI:59789"/>
        <dbReference type="ChEBI" id="CHEBI:61929"/>
        <dbReference type="ChEBI" id="CHEBI:61976"/>
    </reaction>
    <physiologicalReaction direction="left-to-right" evidence="17">
        <dbReference type="Rhea" id="RHEA:60269"/>
    </physiologicalReaction>
</comment>
<comment type="catalytic activity">
    <reaction evidence="17">
        <text>N(6),N(6)-dimethyl-L-lysyl(4)-[histone H3] + S-adenosyl-L-methionine = N(6),N(6),N(6)-trimethyl-L-lysyl(4)-[histone H3] + S-adenosyl-L-homocysteine + H(+)</text>
        <dbReference type="Rhea" id="RHEA:60272"/>
        <dbReference type="Rhea" id="RHEA-COMP:15537"/>
        <dbReference type="Rhea" id="RHEA-COMP:15540"/>
        <dbReference type="ChEBI" id="CHEBI:15378"/>
        <dbReference type="ChEBI" id="CHEBI:57856"/>
        <dbReference type="ChEBI" id="CHEBI:59789"/>
        <dbReference type="ChEBI" id="CHEBI:61961"/>
        <dbReference type="ChEBI" id="CHEBI:61976"/>
    </reaction>
    <physiologicalReaction direction="left-to-right" evidence="17">
        <dbReference type="Rhea" id="RHEA:60273"/>
    </physiologicalReaction>
</comment>
<comment type="subunit">
    <text evidence="1 7 8 9 10 11 12 13 14 15 16 17 18">Component of the SET1A/COMPASS complex composed of the catalytic subunit SETD1A, WDR5, WDR82, RBBP5, ASH2L/ASH2, CXXC1/CFP1, HCFC1 and DPY30 homotrimer (PubMed:16253997, PubMed:17355966, PubMed:17998332, PubMed:18838538, PubMed:22266653, PubMed:22665483, PubMed:23508102). Forms a core complex with the evolutionary conserved subcomplex WRAD composed of WDR5, RBBP5, ASH2L/ASH2 and DPY30 subunits; WRAD differentially stimulates the methyltransferase activity (PubMed:22266653, PubMed:22665483, PubMed:23508102, PubMed:25561738). Interacts with BOD1L1 (via COMPASS-Shg1 domain) at replication forks (PubMed:29937342). Interacts with HCFC1 (PubMed:12670868). Interacts with ASH2/ASH2L (PubMed:17998332). Interacts with CXXC1/CFP1 (PubMed:17998332). Interacts with RBBP5 (PubMed:17998332). Interacts (via N-terminal region) with WDR82; the interaction is direct (PubMed:17998332, PubMed:37030068). Interacts (via the RRM domain) with hyperphosphorylated C-terminal domain (CTD) of RNA polymerase II large subunit (POLR2A) only in the presence of WDR82 (PubMed:17998332). Binds specifically to CTD heptad repeats phosphorylated on 'Ser-5' of each heptad. Interacts with ZNF335 (PubMed:23178126). Interacts with SUPT6H (PubMed:22843687). Interacts with NAP1L1 (By similarity). Interacts (via WIN motif) with WDR5 (PubMed:17998332, PubMed:22266653, PubMed:22665483).</text>
</comment>
<comment type="interaction">
    <interactant intactId="EBI-540779">
        <id>O15047</id>
    </interactant>
    <interactant intactId="EBI-16130425">
        <id>Q9UBL3-3</id>
        <label>ASH2L</label>
    </interactant>
    <organismsDiffer>false</organismsDiffer>
    <experiments>2</experiments>
</comment>
<comment type="interaction">
    <interactant intactId="EBI-540779">
        <id>O15047</id>
    </interactant>
    <interactant intactId="EBI-396176">
        <id>P51610</id>
        <label>HCFC1</label>
    </interactant>
    <organismsDiffer>false</organismsDiffer>
    <experiments>2</experiments>
</comment>
<comment type="interaction">
    <interactant intactId="EBI-540779">
        <id>O15047</id>
    </interactant>
    <interactant intactId="EBI-592823">
        <id>Q15291</id>
        <label>RBBP5</label>
    </interactant>
    <organismsDiffer>false</organismsDiffer>
    <experiments>5</experiments>
</comment>
<comment type="interaction">
    <interactant intactId="EBI-540779">
        <id>O15047</id>
    </interactant>
    <interactant intactId="EBI-397872">
        <id>Q02248</id>
        <label>Ctnnb1</label>
    </interactant>
    <organismsDiffer>true</organismsDiffer>
    <experiments>2</experiments>
</comment>
<comment type="subcellular location">
    <subcellularLocation>
        <location evidence="9 22">Nucleus speckle</location>
    </subcellularLocation>
    <subcellularLocation>
        <location evidence="9">Chromosome</location>
    </subcellularLocation>
    <subcellularLocation>
        <location evidence="22">Cytoplasm</location>
    </subcellularLocation>
    <text evidence="9 22">Localizes to a largely non-overlapping set of euchromatic nuclear speckles with SETD1B, suggesting that SETD1A and SETD1B each bind to a unique set of target genes (PubMed:17355966). Predominantly nuclear (PubMed:38003223).</text>
</comment>
<comment type="domain">
    <text evidence="22">The RRM domain confers RNA binding activity.</text>
</comment>
<comment type="disease" evidence="19">
    <disease id="DI-05807">
        <name>Epilepsy, early-onset, 2, with or without developmental delay</name>
        <acronym>EPEO2</acronym>
        <description>An autosomal dominant neurologic disorder characterized by early onset of generalized tonic-clonic seizures associated with sharp wave and sharp slow wave discharges on EEG. Some EPEO2 patients have normal psychomotor development and normal brain imaging, whereas others may show developmental delay associated with abnormalities on brain imaging.</description>
        <dbReference type="MIM" id="618832"/>
    </disease>
    <text>The disease is caused by variants affecting the gene represented in this entry.</text>
</comment>
<comment type="disease" evidence="20">
    <disease id="DI-05944">
        <name>Neurodevelopmental disorder with speech impairment and dysmorphic facies</name>
        <acronym>NEDSID</acronym>
        <description>An autosomal dominant disorder characterized by global developmental delay, intellectual disability, speech delay, subtle facial dysmorphism, and behavioral and psychiatric problems.</description>
        <dbReference type="MIM" id="619056"/>
    </disease>
    <text>The disease is caused by variants affecting the gene represented in this entry.</text>
</comment>
<comment type="similarity">
    <text evidence="5">Belongs to the class V-like SAM-binding methyltransferase superfamily.</text>
</comment>
<comment type="sequence caution" evidence="23">
    <conflict type="miscellaneous discrepancy">
        <sequence resource="EMBL-CDS" id="AAH35795"/>
    </conflict>
    <text>Contaminating sequence. Potential poly-A sequence.</text>
</comment>
<comment type="sequence caution" evidence="23">
    <conflict type="erroneous termination">
        <sequence resource="EMBL" id="AC135048"/>
    </conflict>
    <text>Truncated C-terminus.</text>
</comment>
<comment type="sequence caution" evidence="23">
    <conflict type="erroneous initiation">
        <sequence resource="EMBL-CDS" id="BAA20797"/>
    </conflict>
    <text>Extended N-terminus.</text>
</comment>